<feature type="chain" id="PRO_1000122414" description="Homoserine kinase">
    <location>
        <begin position="1"/>
        <end position="300"/>
    </location>
</feature>
<feature type="binding site" evidence="1">
    <location>
        <begin position="87"/>
        <end position="97"/>
    </location>
    <ligand>
        <name>ATP</name>
        <dbReference type="ChEBI" id="CHEBI:30616"/>
    </ligand>
</feature>
<dbReference type="EC" id="2.7.1.39" evidence="1"/>
<dbReference type="EMBL" id="CP000673">
    <property type="protein sequence ID" value="EDK32911.1"/>
    <property type="molecule type" value="Genomic_DNA"/>
</dbReference>
<dbReference type="RefSeq" id="WP_011989422.1">
    <property type="nucleotide sequence ID" value="NC_009706.1"/>
</dbReference>
<dbReference type="SMR" id="A5N6I0"/>
<dbReference type="STRING" id="431943.CKL_0860"/>
<dbReference type="KEGG" id="ckl:CKL_0860"/>
<dbReference type="eggNOG" id="COG0083">
    <property type="taxonomic scope" value="Bacteria"/>
</dbReference>
<dbReference type="HOGENOM" id="CLU_041243_0_0_9"/>
<dbReference type="UniPathway" id="UPA00050">
    <property type="reaction ID" value="UER00064"/>
</dbReference>
<dbReference type="Proteomes" id="UP000002411">
    <property type="component" value="Chromosome"/>
</dbReference>
<dbReference type="GO" id="GO:0005737">
    <property type="term" value="C:cytoplasm"/>
    <property type="evidence" value="ECO:0007669"/>
    <property type="project" value="UniProtKB-SubCell"/>
</dbReference>
<dbReference type="GO" id="GO:0005524">
    <property type="term" value="F:ATP binding"/>
    <property type="evidence" value="ECO:0007669"/>
    <property type="project" value="UniProtKB-UniRule"/>
</dbReference>
<dbReference type="GO" id="GO:0004413">
    <property type="term" value="F:homoserine kinase activity"/>
    <property type="evidence" value="ECO:0007669"/>
    <property type="project" value="UniProtKB-UniRule"/>
</dbReference>
<dbReference type="GO" id="GO:0009088">
    <property type="term" value="P:threonine biosynthetic process"/>
    <property type="evidence" value="ECO:0007669"/>
    <property type="project" value="UniProtKB-UniRule"/>
</dbReference>
<dbReference type="Gene3D" id="3.30.230.10">
    <property type="match status" value="1"/>
</dbReference>
<dbReference type="Gene3D" id="3.30.70.890">
    <property type="entry name" value="GHMP kinase, C-terminal domain"/>
    <property type="match status" value="1"/>
</dbReference>
<dbReference type="HAMAP" id="MF_00384">
    <property type="entry name" value="Homoser_kinase"/>
    <property type="match status" value="1"/>
</dbReference>
<dbReference type="InterPro" id="IPR013750">
    <property type="entry name" value="GHMP_kinase_C_dom"/>
</dbReference>
<dbReference type="InterPro" id="IPR036554">
    <property type="entry name" value="GHMP_kinase_C_sf"/>
</dbReference>
<dbReference type="InterPro" id="IPR006204">
    <property type="entry name" value="GHMP_kinase_N_dom"/>
</dbReference>
<dbReference type="InterPro" id="IPR006203">
    <property type="entry name" value="GHMP_knse_ATP-bd_CS"/>
</dbReference>
<dbReference type="InterPro" id="IPR000870">
    <property type="entry name" value="Homoserine_kinase"/>
</dbReference>
<dbReference type="InterPro" id="IPR020568">
    <property type="entry name" value="Ribosomal_Su5_D2-typ_SF"/>
</dbReference>
<dbReference type="InterPro" id="IPR014721">
    <property type="entry name" value="Ribsml_uS5_D2-typ_fold_subgr"/>
</dbReference>
<dbReference type="NCBIfam" id="TIGR00191">
    <property type="entry name" value="thrB"/>
    <property type="match status" value="1"/>
</dbReference>
<dbReference type="PANTHER" id="PTHR20861:SF1">
    <property type="entry name" value="HOMOSERINE KINASE"/>
    <property type="match status" value="1"/>
</dbReference>
<dbReference type="PANTHER" id="PTHR20861">
    <property type="entry name" value="HOMOSERINE/4-DIPHOSPHOCYTIDYL-2-C-METHYL-D-ERYTHRITOL KINASE"/>
    <property type="match status" value="1"/>
</dbReference>
<dbReference type="Pfam" id="PF08544">
    <property type="entry name" value="GHMP_kinases_C"/>
    <property type="match status" value="1"/>
</dbReference>
<dbReference type="Pfam" id="PF00288">
    <property type="entry name" value="GHMP_kinases_N"/>
    <property type="match status" value="1"/>
</dbReference>
<dbReference type="PIRSF" id="PIRSF000676">
    <property type="entry name" value="Homoser_kin"/>
    <property type="match status" value="1"/>
</dbReference>
<dbReference type="PRINTS" id="PR00958">
    <property type="entry name" value="HOMSERKINASE"/>
</dbReference>
<dbReference type="SUPFAM" id="SSF55060">
    <property type="entry name" value="GHMP Kinase, C-terminal domain"/>
    <property type="match status" value="1"/>
</dbReference>
<dbReference type="SUPFAM" id="SSF54211">
    <property type="entry name" value="Ribosomal protein S5 domain 2-like"/>
    <property type="match status" value="1"/>
</dbReference>
<dbReference type="PROSITE" id="PS00627">
    <property type="entry name" value="GHMP_KINASES_ATP"/>
    <property type="match status" value="1"/>
</dbReference>
<accession>A5N6I0</accession>
<gene>
    <name evidence="1" type="primary">thrB</name>
    <name type="ordered locus">CKL_0860</name>
</gene>
<keyword id="KW-0028">Amino-acid biosynthesis</keyword>
<keyword id="KW-0067">ATP-binding</keyword>
<keyword id="KW-0963">Cytoplasm</keyword>
<keyword id="KW-0418">Kinase</keyword>
<keyword id="KW-0547">Nucleotide-binding</keyword>
<keyword id="KW-1185">Reference proteome</keyword>
<keyword id="KW-0791">Threonine biosynthesis</keyword>
<keyword id="KW-0808">Transferase</keyword>
<proteinExistence type="inferred from homology"/>
<name>KHSE_CLOK5</name>
<comment type="function">
    <text evidence="1">Catalyzes the ATP-dependent phosphorylation of L-homoserine to L-homoserine phosphate.</text>
</comment>
<comment type="catalytic activity">
    <reaction evidence="1">
        <text>L-homoserine + ATP = O-phospho-L-homoserine + ADP + H(+)</text>
        <dbReference type="Rhea" id="RHEA:13985"/>
        <dbReference type="ChEBI" id="CHEBI:15378"/>
        <dbReference type="ChEBI" id="CHEBI:30616"/>
        <dbReference type="ChEBI" id="CHEBI:57476"/>
        <dbReference type="ChEBI" id="CHEBI:57590"/>
        <dbReference type="ChEBI" id="CHEBI:456216"/>
        <dbReference type="EC" id="2.7.1.39"/>
    </reaction>
</comment>
<comment type="pathway">
    <text evidence="1">Amino-acid biosynthesis; L-threonine biosynthesis; L-threonine from L-aspartate: step 4/5.</text>
</comment>
<comment type="subcellular location">
    <subcellularLocation>
        <location evidence="1">Cytoplasm</location>
    </subcellularLocation>
</comment>
<comment type="similarity">
    <text evidence="1">Belongs to the GHMP kinase family. Homoserine kinase subfamily.</text>
</comment>
<reference key="1">
    <citation type="journal article" date="2008" name="Proc. Natl. Acad. Sci. U.S.A.">
        <title>The genome of Clostridium kluyveri, a strict anaerobe with unique metabolic features.</title>
        <authorList>
            <person name="Seedorf H."/>
            <person name="Fricke W.F."/>
            <person name="Veith B."/>
            <person name="Brueggemann H."/>
            <person name="Liesegang H."/>
            <person name="Strittmatter A."/>
            <person name="Miethke M."/>
            <person name="Buckel W."/>
            <person name="Hinderberger J."/>
            <person name="Li F."/>
            <person name="Hagemeier C."/>
            <person name="Thauer R.K."/>
            <person name="Gottschalk G."/>
        </authorList>
    </citation>
    <scope>NUCLEOTIDE SEQUENCE [LARGE SCALE GENOMIC DNA]</scope>
    <source>
        <strain>ATCC 8527 / DSM 555 / NBRC 12016 / NCIMB 10680 / K1</strain>
    </source>
</reference>
<protein>
    <recommendedName>
        <fullName evidence="1">Homoserine kinase</fullName>
        <shortName evidence="1">HK</shortName>
        <shortName evidence="1">HSK</shortName>
        <ecNumber evidence="1">2.7.1.39</ecNumber>
    </recommendedName>
</protein>
<sequence>MAKVKVRIPATTANMGPGFDTLGMALKLYNEIEVEEINGKTQIYNNGLKSEEDFGNNLIYKSIIETMNKGGYSYKGFKINVVKCDVPISRGLGSSSACIVGGIKIANEIMGNKLELKDMIDLATKIEGHPDNVVPAMVGGMVVSLKTGEDIKYSKIDLPKQLKFVAMIPSFQVNTALSRKVLPKSYLKEECIFNISRCAMLVSALYNGEFDKLRTCFQDKIHQPYRKNLIKNSDDIFKKAVEFGSIGEFISGSGSTLMAVLNKNEDEFVISIKRYLSGLQDKWNVILLEPDLEGVRIVKI</sequence>
<evidence type="ECO:0000255" key="1">
    <source>
        <dbReference type="HAMAP-Rule" id="MF_00384"/>
    </source>
</evidence>
<organism>
    <name type="scientific">Clostridium kluyveri (strain ATCC 8527 / DSM 555 / NBRC 12016 / NCIMB 10680 / K1)</name>
    <dbReference type="NCBI Taxonomy" id="431943"/>
    <lineage>
        <taxon>Bacteria</taxon>
        <taxon>Bacillati</taxon>
        <taxon>Bacillota</taxon>
        <taxon>Clostridia</taxon>
        <taxon>Eubacteriales</taxon>
        <taxon>Clostridiaceae</taxon>
        <taxon>Clostridium</taxon>
    </lineage>
</organism>